<keyword id="KW-0186">Copper</keyword>
<keyword id="KW-0903">Direct protein sequencing</keyword>
<keyword id="KW-0479">Metal-binding</keyword>
<keyword id="KW-0964">Secreted</keyword>
<keyword id="KW-0732">Signal</keyword>
<proteinExistence type="evidence at protein level"/>
<protein>
    <recommendedName>
        <fullName>Tyrosinase-like protein</fullName>
    </recommendedName>
    <alternativeName>
        <fullName>Tyrosinase-2</fullName>
    </alternativeName>
</protein>
<dbReference type="EMBL" id="GT278854">
    <property type="status" value="NOT_ANNOTATED_CDS"/>
    <property type="molecule type" value="mRNA"/>
</dbReference>
<dbReference type="EMBL" id="GT281565">
    <property type="status" value="NOT_ANNOTATED_CDS"/>
    <property type="molecule type" value="mRNA"/>
</dbReference>
<dbReference type="EMBL" id="GT281776">
    <property type="status" value="NOT_ANNOTATED_CDS"/>
    <property type="molecule type" value="mRNA"/>
</dbReference>
<dbReference type="EMBL" id="GT282052">
    <property type="status" value="NOT_ANNOTATED_CDS"/>
    <property type="molecule type" value="mRNA"/>
</dbReference>
<dbReference type="EMBL" id="EZ420237">
    <property type="status" value="NOT_ANNOTATED_CDS"/>
    <property type="molecule type" value="mRNA"/>
</dbReference>
<dbReference type="SMR" id="P86952"/>
<dbReference type="GO" id="GO:0005576">
    <property type="term" value="C:extracellular region"/>
    <property type="evidence" value="ECO:0007669"/>
    <property type="project" value="UniProtKB-SubCell"/>
</dbReference>
<dbReference type="GO" id="GO:0046872">
    <property type="term" value="F:metal ion binding"/>
    <property type="evidence" value="ECO:0007669"/>
    <property type="project" value="UniProtKB-KW"/>
</dbReference>
<dbReference type="GO" id="GO:0016491">
    <property type="term" value="F:oxidoreductase activity"/>
    <property type="evidence" value="ECO:0007669"/>
    <property type="project" value="InterPro"/>
</dbReference>
<dbReference type="Gene3D" id="1.10.1280.10">
    <property type="entry name" value="Di-copper center containing domain from catechol oxidase"/>
    <property type="match status" value="1"/>
</dbReference>
<dbReference type="InterPro" id="IPR008922">
    <property type="entry name" value="Di-copper_centre_dom_sf"/>
</dbReference>
<dbReference type="InterPro" id="IPR050316">
    <property type="entry name" value="Tyrosinase/Hemocyanin"/>
</dbReference>
<dbReference type="InterPro" id="IPR002227">
    <property type="entry name" value="Tyrosinase_Cu-bd"/>
</dbReference>
<dbReference type="PANTHER" id="PTHR11474">
    <property type="entry name" value="TYROSINASE FAMILY MEMBER"/>
    <property type="match status" value="1"/>
</dbReference>
<dbReference type="PANTHER" id="PTHR11474:SF126">
    <property type="entry name" value="TYROSINASE-LIKE PROTEIN TYR-1-RELATED"/>
    <property type="match status" value="1"/>
</dbReference>
<dbReference type="Pfam" id="PF00264">
    <property type="entry name" value="Tyrosinase"/>
    <property type="match status" value="1"/>
</dbReference>
<dbReference type="PRINTS" id="PR00092">
    <property type="entry name" value="TYROSINASE"/>
</dbReference>
<dbReference type="SUPFAM" id="SSF48056">
    <property type="entry name" value="Di-copper centre-containing domain"/>
    <property type="match status" value="1"/>
</dbReference>
<dbReference type="PROSITE" id="PS00497">
    <property type="entry name" value="TYROSINASE_1"/>
    <property type="match status" value="1"/>
</dbReference>
<dbReference type="PROSITE" id="PS00498">
    <property type="entry name" value="TYROSINASE_2"/>
    <property type="match status" value="1"/>
</dbReference>
<evidence type="ECO:0000250" key="1">
    <source>
        <dbReference type="UniProtKB" id="P06845"/>
    </source>
</evidence>
<evidence type="ECO:0000250" key="2">
    <source>
        <dbReference type="UniProtKB" id="Q9ZP19"/>
    </source>
</evidence>
<evidence type="ECO:0000255" key="3"/>
<evidence type="ECO:0000269" key="4">
    <source>
    </source>
</evidence>
<evidence type="ECO:0000269" key="5">
    <source>
    </source>
</evidence>
<evidence type="ECO:0000305" key="6"/>
<reference evidence="6" key="1">
    <citation type="journal article" date="2010" name="Mol. Biol. Evol.">
        <title>Parallel evolution of nacre building gene sets in molluscs.</title>
        <authorList>
            <person name="Jackson D.J."/>
            <person name="McDougall C."/>
            <person name="Woodcroft B."/>
            <person name="Moase P."/>
            <person name="Rose R.A."/>
            <person name="Kube M."/>
            <person name="Reinhardt R."/>
            <person name="Rokhsar D.S."/>
            <person name="Montagnani C."/>
            <person name="Joubert C."/>
            <person name="Piquemal D."/>
            <person name="Degnan B.M."/>
        </authorList>
    </citation>
    <scope>NUCLEOTIDE SEQUENCE [MRNA]</scope>
    <scope>IDENTIFICATION</scope>
    <source>
        <tissue evidence="4">Mantle</tissue>
    </source>
</reference>
<reference key="2">
    <citation type="journal article" date="2012" name="Proc. Natl. Acad. Sci. U.S.A.">
        <title>Different secretory repertoires control the biomineralization processes of prism and nacre deposition of the pearl oyster shell.</title>
        <authorList>
            <person name="Marie B."/>
            <person name="Joubert C."/>
            <person name="Tayale A."/>
            <person name="Zanella-Cleon I."/>
            <person name="Belliard C."/>
            <person name="Piquemal D."/>
            <person name="Cochennec-Laureau N."/>
            <person name="Marin F."/>
            <person name="Gueguen Y."/>
            <person name="Montagnani C."/>
        </authorList>
    </citation>
    <scope>PROTEIN SEQUENCE OF 165-172; 214-239; 244-252 AND 370-384</scope>
    <scope>SUBCELLULAR LOCATION</scope>
    <scope>TISSUE SPECIFICITY</scope>
    <source>
        <tissue>Shell</tissue>
    </source>
</reference>
<accession>P86952</accession>
<name>TYRO_PINMA</name>
<feature type="signal peptide" evidence="3">
    <location>
        <begin position="1"/>
        <end position="22"/>
    </location>
</feature>
<feature type="chain" id="PRO_0000413088" description="Tyrosinase-like protein" evidence="3">
    <location>
        <begin position="23"/>
        <end position="456"/>
    </location>
</feature>
<feature type="binding site" evidence="2">
    <location>
        <position position="145"/>
    </location>
    <ligand>
        <name>Cu cation</name>
        <dbReference type="ChEBI" id="CHEBI:23378"/>
        <label>A</label>
    </ligand>
</feature>
<feature type="binding site" evidence="1">
    <location>
        <position position="154"/>
    </location>
    <ligand>
        <name>Cu cation</name>
        <dbReference type="ChEBI" id="CHEBI:23378"/>
        <label>A</label>
    </ligand>
</feature>
<feature type="binding site" evidence="1">
    <location>
        <position position="163"/>
    </location>
    <ligand>
        <name>Cu cation</name>
        <dbReference type="ChEBI" id="CHEBI:23378"/>
        <label>A</label>
    </ligand>
</feature>
<feature type="binding site" evidence="1">
    <location>
        <position position="295"/>
    </location>
    <ligand>
        <name>Cu cation</name>
        <dbReference type="ChEBI" id="CHEBI:23378"/>
        <label>B</label>
    </ligand>
</feature>
<feature type="binding site" evidence="1">
    <location>
        <position position="299"/>
    </location>
    <ligand>
        <name>Cu cation</name>
        <dbReference type="ChEBI" id="CHEBI:23378"/>
        <label>B</label>
    </ligand>
</feature>
<feature type="binding site" evidence="1">
    <location>
        <position position="322"/>
    </location>
    <ligand>
        <name>Cu cation</name>
        <dbReference type="ChEBI" id="CHEBI:23378"/>
        <label>B</label>
    </ligand>
</feature>
<feature type="sequence conflict" description="In Ref. 1; GT281565." evidence="6" ref="1">
    <original>N</original>
    <variation>H</variation>
    <location>
        <position position="359"/>
    </location>
</feature>
<sequence length="456" mass="52851">MNTMTLLGKVFLLQFLIGVGFCMLMQDPKRNDTKGTYAACFRSQPQGNEPASPDCLKAFMAYAEDMKNIFHFTKEQINYLWSLERETQSLLHNHRRRKRQAVYLPVRKECRLLSELERQNLFYTVRSLKMDTSNPNEYDTLANLHRGAVQPHAHDGSNFLGWHRVYLMYYERALRRIRGDVTLCFWDTTMEFNLGMDNWEYTAVFSSDFFGNRRGQVITGPFRDWPLPPGLTESDYLYRNMTRGRGMPFDSRAASSIFYNPNTIIHSTITWEGFGFDTITNSQGQTRNITIEGEHNNVHNWVGGAMGFLDPAPQDPIFFFHHCYIDYVWERFREKMRRYFRDPTTDYPGHGNETLHDANYPMIGFEWYRNIDGYSDYFTQNVYRYESPTCQACYYSPYTVCGQGNQCIARMNYPGTEIEEGPQVPNGPVAAFSVAGGTMMMSASNGRGFIATSNSE</sequence>
<comment type="cofactor">
    <cofactor evidence="1">
        <name>Cu(2+)</name>
        <dbReference type="ChEBI" id="CHEBI:29036"/>
    </cofactor>
    <text evidence="1">Binds 2 copper ions per subunit.</text>
</comment>
<comment type="subcellular location">
    <subcellularLocation>
        <location evidence="5">Secreted</location>
    </subcellularLocation>
</comment>
<comment type="tissue specificity">
    <text evidence="5">Prismatic layer of shell (at protein level).</text>
</comment>
<comment type="similarity">
    <text evidence="3">Belongs to the tyrosinase family.</text>
</comment>
<organism>
    <name type="scientific">Pinctada maxima</name>
    <name type="common">Silver-lipped pearl oyster</name>
    <name type="synonym">White-lipped pearl oyster</name>
    <dbReference type="NCBI Taxonomy" id="104660"/>
    <lineage>
        <taxon>Eukaryota</taxon>
        <taxon>Metazoa</taxon>
        <taxon>Spiralia</taxon>
        <taxon>Lophotrochozoa</taxon>
        <taxon>Mollusca</taxon>
        <taxon>Bivalvia</taxon>
        <taxon>Autobranchia</taxon>
        <taxon>Pteriomorphia</taxon>
        <taxon>Pterioida</taxon>
        <taxon>Pterioidea</taxon>
        <taxon>Pteriidae</taxon>
        <taxon>Pinctada</taxon>
    </lineage>
</organism>